<accession>P0C0V2</accession>
<accession>D3DM97</accession>
<name>YE18A_YEAST</name>
<gene>
    <name type="ordered locus">YER188C-A</name>
</gene>
<reference key="1">
    <citation type="journal article" date="1997" name="Nature">
        <title>The nucleotide sequence of Saccharomyces cerevisiae chromosome V.</title>
        <authorList>
            <person name="Dietrich F.S."/>
            <person name="Mulligan J.T."/>
            <person name="Hennessy K.M."/>
            <person name="Yelton M.A."/>
            <person name="Allen E."/>
            <person name="Araujo R."/>
            <person name="Aviles E."/>
            <person name="Berno A."/>
            <person name="Brennan T."/>
            <person name="Carpenter J."/>
            <person name="Chen E."/>
            <person name="Cherry J.M."/>
            <person name="Chung E."/>
            <person name="Duncan M."/>
            <person name="Guzman E."/>
            <person name="Hartzell G."/>
            <person name="Hunicke-Smith S."/>
            <person name="Hyman R.W."/>
            <person name="Kayser A."/>
            <person name="Komp C."/>
            <person name="Lashkari D."/>
            <person name="Lew H."/>
            <person name="Lin D."/>
            <person name="Mosedale D."/>
            <person name="Nakahara K."/>
            <person name="Namath A."/>
            <person name="Norgren R."/>
            <person name="Oefner P."/>
            <person name="Oh C."/>
            <person name="Petel F.X."/>
            <person name="Roberts D."/>
            <person name="Sehl P."/>
            <person name="Schramm S."/>
            <person name="Shogren T."/>
            <person name="Smith V."/>
            <person name="Taylor P."/>
            <person name="Wei Y."/>
            <person name="Botstein D."/>
            <person name="Davis R.W."/>
        </authorList>
    </citation>
    <scope>NUCLEOTIDE SEQUENCE [LARGE SCALE GENOMIC DNA]</scope>
    <source>
        <strain>ATCC 204508 / S288c</strain>
    </source>
</reference>
<reference key="2">
    <citation type="journal article" date="2014" name="G3 (Bethesda)">
        <title>The reference genome sequence of Saccharomyces cerevisiae: Then and now.</title>
        <authorList>
            <person name="Engel S.R."/>
            <person name="Dietrich F.S."/>
            <person name="Fisk D.G."/>
            <person name="Binkley G."/>
            <person name="Balakrishnan R."/>
            <person name="Costanzo M.C."/>
            <person name="Dwight S.S."/>
            <person name="Hitz B.C."/>
            <person name="Karra K."/>
            <person name="Nash R.S."/>
            <person name="Weng S."/>
            <person name="Wong E.D."/>
            <person name="Lloyd P."/>
            <person name="Skrzypek M.S."/>
            <person name="Miyasato S.R."/>
            <person name="Simison M."/>
            <person name="Cherry J.M."/>
        </authorList>
    </citation>
    <scope>GENOME REANNOTATION</scope>
    <source>
        <strain>ATCC 204508 / S288c</strain>
    </source>
</reference>
<dbReference type="EMBL" id="U18922">
    <property type="status" value="NOT_ANNOTATED_CDS"/>
    <property type="molecule type" value="Genomic_DNA"/>
</dbReference>
<dbReference type="EMBL" id="BK006939">
    <property type="protein sequence ID" value="DAA07851.1"/>
    <property type="molecule type" value="Genomic_DNA"/>
</dbReference>
<dbReference type="RefSeq" id="NP_878070.1">
    <property type="nucleotide sequence ID" value="NM_001184633.1"/>
</dbReference>
<dbReference type="BioGRID" id="37080">
    <property type="interactions" value="41"/>
</dbReference>
<dbReference type="FunCoup" id="P0C0V2">
    <property type="interactions" value="19"/>
</dbReference>
<dbReference type="STRING" id="4932.YER188C-A"/>
<dbReference type="PaxDb" id="4932-YER188C-A"/>
<dbReference type="EnsemblFungi" id="YER188C-A_mRNA">
    <property type="protein sequence ID" value="YER188C-A"/>
    <property type="gene ID" value="YER188C-A"/>
</dbReference>
<dbReference type="GeneID" id="1466538"/>
<dbReference type="KEGG" id="sce:YER188C-A"/>
<dbReference type="AGR" id="SGD:S000028764"/>
<dbReference type="SGD" id="S000028764">
    <property type="gene designation" value="YER188C-A"/>
</dbReference>
<dbReference type="VEuPathDB" id="FungiDB:YER188C-A"/>
<dbReference type="GeneTree" id="ENSGT00940000177535"/>
<dbReference type="HOGENOM" id="CLU_164954_0_0_1"/>
<dbReference type="InParanoid" id="P0C0V2"/>
<dbReference type="OrthoDB" id="4070824at2759"/>
<dbReference type="BioCyc" id="YEAST:G3O-30397-MONOMER"/>
<dbReference type="BioGRID-ORCS" id="1466538">
    <property type="hits" value="0 hits in 10 CRISPR screens"/>
</dbReference>
<dbReference type="PRO" id="PR:P0C0V2"/>
<dbReference type="Proteomes" id="UP000002311">
    <property type="component" value="Chromosome V"/>
</dbReference>
<dbReference type="RNAct" id="P0C0V2">
    <property type="molecule type" value="protein"/>
</dbReference>
<dbReference type="InterPro" id="IPR007414">
    <property type="entry name" value="DUF468"/>
</dbReference>
<dbReference type="Pfam" id="PF04318">
    <property type="entry name" value="DUF468"/>
    <property type="match status" value="1"/>
</dbReference>
<evidence type="ECO:0000305" key="1"/>
<feature type="chain" id="PRO_0000211371" description="UPF0320 protein YER188C-A">
    <location>
        <begin position="1"/>
        <end position="99"/>
    </location>
</feature>
<proteinExistence type="inferred from homology"/>
<sequence length="99" mass="11411">MAHLSLNQYKCTHIIMHGTCLSGLYPVPFTHKAHDYPHFNIYISFGGPKYCITALNTYVIPLFHHLLSTQFIYTYVNITKKSPLKSPKHKNILSFNDNT</sequence>
<protein>
    <recommendedName>
        <fullName>UPF0320 protein YER188C-A</fullName>
    </recommendedName>
</protein>
<keyword id="KW-1185">Reference proteome</keyword>
<comment type="similarity">
    <text evidence="1">Belongs to the UPF0320 family.</text>
</comment>
<organism>
    <name type="scientific">Saccharomyces cerevisiae (strain ATCC 204508 / S288c)</name>
    <name type="common">Baker's yeast</name>
    <dbReference type="NCBI Taxonomy" id="559292"/>
    <lineage>
        <taxon>Eukaryota</taxon>
        <taxon>Fungi</taxon>
        <taxon>Dikarya</taxon>
        <taxon>Ascomycota</taxon>
        <taxon>Saccharomycotina</taxon>
        <taxon>Saccharomycetes</taxon>
        <taxon>Saccharomycetales</taxon>
        <taxon>Saccharomycetaceae</taxon>
        <taxon>Saccharomyces</taxon>
    </lineage>
</organism>